<organism>
    <name type="scientific">Saccharolobus islandicus (strain L.S.2.15 / Lassen #1)</name>
    <name type="common">Sulfolobus islandicus</name>
    <dbReference type="NCBI Taxonomy" id="429572"/>
    <lineage>
        <taxon>Archaea</taxon>
        <taxon>Thermoproteota</taxon>
        <taxon>Thermoprotei</taxon>
        <taxon>Sulfolobales</taxon>
        <taxon>Sulfolobaceae</taxon>
        <taxon>Saccharolobus</taxon>
    </lineage>
</organism>
<name>NIKR_SACI2</name>
<sequence>MSAEKISISLPKELYRELEDFITRKGIPDRSKIFQIALRNYLDENREGTEIIYGIINLVYDHEEASEALTEIQHEYKDNIISTLHLHVNERLCIEAIAVKGEKSKLVELNNRLGQIRGILKARLLISFPYEKT</sequence>
<protein>
    <recommendedName>
        <fullName evidence="1">Putative nickel-responsive regulator</fullName>
    </recommendedName>
</protein>
<keyword id="KW-0238">DNA-binding</keyword>
<keyword id="KW-0479">Metal-binding</keyword>
<keyword id="KW-0533">Nickel</keyword>
<keyword id="KW-0804">Transcription</keyword>
<keyword id="KW-0805">Transcription regulation</keyword>
<dbReference type="EMBL" id="CP001399">
    <property type="protein sequence ID" value="ACP35590.1"/>
    <property type="molecule type" value="Genomic_DNA"/>
</dbReference>
<dbReference type="RefSeq" id="WP_012711473.1">
    <property type="nucleotide sequence ID" value="NC_012589.1"/>
</dbReference>
<dbReference type="SMR" id="C3MQC7"/>
<dbReference type="KEGG" id="sis:LS215_1585"/>
<dbReference type="HOGENOM" id="CLU_113319_2_1_2"/>
<dbReference type="OrthoDB" id="25654at2157"/>
<dbReference type="Proteomes" id="UP000001747">
    <property type="component" value="Chromosome"/>
</dbReference>
<dbReference type="GO" id="GO:0003677">
    <property type="term" value="F:DNA binding"/>
    <property type="evidence" value="ECO:0007669"/>
    <property type="project" value="UniProtKB-KW"/>
</dbReference>
<dbReference type="GO" id="GO:0003700">
    <property type="term" value="F:DNA-binding transcription factor activity"/>
    <property type="evidence" value="ECO:0007669"/>
    <property type="project" value="UniProtKB-UniRule"/>
</dbReference>
<dbReference type="GO" id="GO:0016151">
    <property type="term" value="F:nickel cation binding"/>
    <property type="evidence" value="ECO:0007669"/>
    <property type="project" value="UniProtKB-UniRule"/>
</dbReference>
<dbReference type="GO" id="GO:0010045">
    <property type="term" value="P:response to nickel cation"/>
    <property type="evidence" value="ECO:0007669"/>
    <property type="project" value="InterPro"/>
</dbReference>
<dbReference type="CDD" id="cd22231">
    <property type="entry name" value="RHH_NikR_HicB-like"/>
    <property type="match status" value="1"/>
</dbReference>
<dbReference type="Gene3D" id="3.30.70.1150">
    <property type="entry name" value="ACT-like. Chain A, domain 2"/>
    <property type="match status" value="1"/>
</dbReference>
<dbReference type="Gene3D" id="1.10.1220.10">
    <property type="entry name" value="Met repressor-like"/>
    <property type="match status" value="1"/>
</dbReference>
<dbReference type="HAMAP" id="MF_00476">
    <property type="entry name" value="NikR"/>
    <property type="match status" value="1"/>
</dbReference>
<dbReference type="InterPro" id="IPR027271">
    <property type="entry name" value="Acetolactate_synth/TF_NikR_C"/>
</dbReference>
<dbReference type="InterPro" id="IPR045865">
    <property type="entry name" value="ACT-like_dom_sf"/>
</dbReference>
<dbReference type="InterPro" id="IPR013321">
    <property type="entry name" value="Arc_rbn_hlx_hlx"/>
</dbReference>
<dbReference type="InterPro" id="IPR002145">
    <property type="entry name" value="CopG"/>
</dbReference>
<dbReference type="InterPro" id="IPR050192">
    <property type="entry name" value="CopG/NikR_regulator"/>
</dbReference>
<dbReference type="InterPro" id="IPR022988">
    <property type="entry name" value="Ni_resp_reg_NikR"/>
</dbReference>
<dbReference type="InterPro" id="IPR010985">
    <property type="entry name" value="Ribbon_hlx_hlx"/>
</dbReference>
<dbReference type="InterPro" id="IPR014864">
    <property type="entry name" value="TF_NikR_Ni-bd_C"/>
</dbReference>
<dbReference type="PANTHER" id="PTHR34719">
    <property type="entry name" value="NICKEL-RESPONSIVE REGULATOR"/>
    <property type="match status" value="1"/>
</dbReference>
<dbReference type="PANTHER" id="PTHR34719:SF2">
    <property type="entry name" value="NICKEL-RESPONSIVE REGULATOR"/>
    <property type="match status" value="1"/>
</dbReference>
<dbReference type="Pfam" id="PF08753">
    <property type="entry name" value="NikR_C"/>
    <property type="match status" value="1"/>
</dbReference>
<dbReference type="Pfam" id="PF01402">
    <property type="entry name" value="RHH_1"/>
    <property type="match status" value="1"/>
</dbReference>
<dbReference type="SUPFAM" id="SSF55021">
    <property type="entry name" value="ACT-like"/>
    <property type="match status" value="1"/>
</dbReference>
<dbReference type="SUPFAM" id="SSF47598">
    <property type="entry name" value="Ribbon-helix-helix"/>
    <property type="match status" value="1"/>
</dbReference>
<proteinExistence type="inferred from homology"/>
<feature type="chain" id="PRO_1000206383" description="Putative nickel-responsive regulator">
    <location>
        <begin position="1"/>
        <end position="133"/>
    </location>
</feature>
<feature type="binding site" evidence="1">
    <location>
        <position position="74"/>
    </location>
    <ligand>
        <name>Ni(2+)</name>
        <dbReference type="ChEBI" id="CHEBI:49786"/>
    </ligand>
</feature>
<feature type="binding site" evidence="1">
    <location>
        <position position="85"/>
    </location>
    <ligand>
        <name>Ni(2+)</name>
        <dbReference type="ChEBI" id="CHEBI:49786"/>
    </ligand>
</feature>
<feature type="binding site" evidence="1">
    <location>
        <position position="87"/>
    </location>
    <ligand>
        <name>Ni(2+)</name>
        <dbReference type="ChEBI" id="CHEBI:49786"/>
    </ligand>
</feature>
<feature type="binding site" evidence="1">
    <location>
        <position position="93"/>
    </location>
    <ligand>
        <name>Ni(2+)</name>
        <dbReference type="ChEBI" id="CHEBI:49786"/>
    </ligand>
</feature>
<accession>C3MQC7</accession>
<gene>
    <name type="ordered locus">LS215_1585</name>
</gene>
<comment type="function">
    <text evidence="1">Transcriptional regulator.</text>
</comment>
<comment type="cofactor">
    <cofactor evidence="1">
        <name>Ni(2+)</name>
        <dbReference type="ChEBI" id="CHEBI:49786"/>
    </cofactor>
    <text evidence="1">Binds 1 nickel ion per subunit.</text>
</comment>
<comment type="similarity">
    <text evidence="1">Belongs to the transcriptional regulatory CopG/NikR family.</text>
</comment>
<evidence type="ECO:0000255" key="1">
    <source>
        <dbReference type="HAMAP-Rule" id="MF_00476"/>
    </source>
</evidence>
<reference key="1">
    <citation type="journal article" date="2009" name="Proc. Natl. Acad. Sci. U.S.A.">
        <title>Biogeography of the Sulfolobus islandicus pan-genome.</title>
        <authorList>
            <person name="Reno M.L."/>
            <person name="Held N.L."/>
            <person name="Fields C.J."/>
            <person name="Burke P.V."/>
            <person name="Whitaker R.J."/>
        </authorList>
    </citation>
    <scope>NUCLEOTIDE SEQUENCE [LARGE SCALE GENOMIC DNA]</scope>
    <source>
        <strain>L.S.2.15 / Lassen #1</strain>
    </source>
</reference>